<reference key="1">
    <citation type="journal article" date="2004" name="Genome Res.">
        <title>The complete genome and proteome of Mycoplasma mobile.</title>
        <authorList>
            <person name="Jaffe J.D."/>
            <person name="Stange-Thomann N."/>
            <person name="Smith C."/>
            <person name="DeCaprio D."/>
            <person name="Fisher S."/>
            <person name="Butler J."/>
            <person name="Calvo S."/>
            <person name="Elkins T."/>
            <person name="FitzGerald M.G."/>
            <person name="Hafez N."/>
            <person name="Kodira C.D."/>
            <person name="Major J."/>
            <person name="Wang S."/>
            <person name="Wilkinson J."/>
            <person name="Nicol R."/>
            <person name="Nusbaum C."/>
            <person name="Birren B."/>
            <person name="Berg H.C."/>
            <person name="Church G.M."/>
        </authorList>
    </citation>
    <scope>NUCLEOTIDE SEQUENCE [LARGE SCALE GENOMIC DNA]</scope>
    <source>
        <strain>ATCC 43663 / NCTC 11711 / 163 K</strain>
    </source>
</reference>
<organism>
    <name type="scientific">Mycoplasma mobile (strain ATCC 43663 / 163K / NCTC 11711)</name>
    <name type="common">Mesomycoplasma mobile</name>
    <dbReference type="NCBI Taxonomy" id="267748"/>
    <lineage>
        <taxon>Bacteria</taxon>
        <taxon>Bacillati</taxon>
        <taxon>Mycoplasmatota</taxon>
        <taxon>Mycoplasmoidales</taxon>
        <taxon>Metamycoplasmataceae</taxon>
        <taxon>Mesomycoplasma</taxon>
    </lineage>
</organism>
<dbReference type="EC" id="2.3.1.234" evidence="1"/>
<dbReference type="EMBL" id="AE017308">
    <property type="protein sequence ID" value="AAT27616.1"/>
    <property type="molecule type" value="Genomic_DNA"/>
</dbReference>
<dbReference type="RefSeq" id="WP_011264650.1">
    <property type="nucleotide sequence ID" value="NC_006908.1"/>
</dbReference>
<dbReference type="SMR" id="Q6KIG0"/>
<dbReference type="STRING" id="267748.MMOB1300"/>
<dbReference type="KEGG" id="mmo:MMOB1300"/>
<dbReference type="eggNOG" id="COG0533">
    <property type="taxonomic scope" value="Bacteria"/>
</dbReference>
<dbReference type="HOGENOM" id="CLU_023208_0_1_14"/>
<dbReference type="OrthoDB" id="9806197at2"/>
<dbReference type="Proteomes" id="UP000009072">
    <property type="component" value="Chromosome"/>
</dbReference>
<dbReference type="GO" id="GO:0005737">
    <property type="term" value="C:cytoplasm"/>
    <property type="evidence" value="ECO:0007669"/>
    <property type="project" value="UniProtKB-SubCell"/>
</dbReference>
<dbReference type="GO" id="GO:0005506">
    <property type="term" value="F:iron ion binding"/>
    <property type="evidence" value="ECO:0007669"/>
    <property type="project" value="UniProtKB-UniRule"/>
</dbReference>
<dbReference type="GO" id="GO:0061711">
    <property type="term" value="F:N(6)-L-threonylcarbamoyladenine synthase activity"/>
    <property type="evidence" value="ECO:0007669"/>
    <property type="project" value="UniProtKB-EC"/>
</dbReference>
<dbReference type="GO" id="GO:0002949">
    <property type="term" value="P:tRNA threonylcarbamoyladenosine modification"/>
    <property type="evidence" value="ECO:0007669"/>
    <property type="project" value="UniProtKB-UniRule"/>
</dbReference>
<dbReference type="Gene3D" id="3.30.420.40">
    <property type="match status" value="2"/>
</dbReference>
<dbReference type="HAMAP" id="MF_01445">
    <property type="entry name" value="TsaD"/>
    <property type="match status" value="1"/>
</dbReference>
<dbReference type="InterPro" id="IPR043129">
    <property type="entry name" value="ATPase_NBD"/>
</dbReference>
<dbReference type="InterPro" id="IPR000905">
    <property type="entry name" value="Gcp-like_dom"/>
</dbReference>
<dbReference type="InterPro" id="IPR017861">
    <property type="entry name" value="KAE1/TsaD"/>
</dbReference>
<dbReference type="InterPro" id="IPR022450">
    <property type="entry name" value="TsaD"/>
</dbReference>
<dbReference type="NCBIfam" id="TIGR00329">
    <property type="entry name" value="gcp_kae1"/>
    <property type="match status" value="1"/>
</dbReference>
<dbReference type="NCBIfam" id="TIGR03723">
    <property type="entry name" value="T6A_TsaD_YgjD"/>
    <property type="match status" value="1"/>
</dbReference>
<dbReference type="PANTHER" id="PTHR11735">
    <property type="entry name" value="TRNA N6-ADENOSINE THREONYLCARBAMOYLTRANSFERASE"/>
    <property type="match status" value="1"/>
</dbReference>
<dbReference type="PANTHER" id="PTHR11735:SF6">
    <property type="entry name" value="TRNA N6-ADENOSINE THREONYLCARBAMOYLTRANSFERASE, MITOCHONDRIAL"/>
    <property type="match status" value="1"/>
</dbReference>
<dbReference type="Pfam" id="PF00814">
    <property type="entry name" value="TsaD"/>
    <property type="match status" value="1"/>
</dbReference>
<dbReference type="PRINTS" id="PR00789">
    <property type="entry name" value="OSIALOPTASE"/>
</dbReference>
<dbReference type="SUPFAM" id="SSF53067">
    <property type="entry name" value="Actin-like ATPase domain"/>
    <property type="match status" value="2"/>
</dbReference>
<proteinExistence type="inferred from homology"/>
<comment type="function">
    <text evidence="1">Required for the formation of a threonylcarbamoyl group on adenosine at position 37 (t(6)A37) in tRNAs that read codons beginning with adenine. Is involved in the transfer of the threonylcarbamoyl moiety of threonylcarbamoyl-AMP (TC-AMP) to the N6 group of A37, together with TsaE and TsaB. TsaD likely plays a direct catalytic role in this reaction.</text>
</comment>
<comment type="catalytic activity">
    <reaction evidence="1">
        <text>L-threonylcarbamoyladenylate + adenosine(37) in tRNA = N(6)-L-threonylcarbamoyladenosine(37) in tRNA + AMP + H(+)</text>
        <dbReference type="Rhea" id="RHEA:37059"/>
        <dbReference type="Rhea" id="RHEA-COMP:10162"/>
        <dbReference type="Rhea" id="RHEA-COMP:10163"/>
        <dbReference type="ChEBI" id="CHEBI:15378"/>
        <dbReference type="ChEBI" id="CHEBI:73682"/>
        <dbReference type="ChEBI" id="CHEBI:74411"/>
        <dbReference type="ChEBI" id="CHEBI:74418"/>
        <dbReference type="ChEBI" id="CHEBI:456215"/>
        <dbReference type="EC" id="2.3.1.234"/>
    </reaction>
</comment>
<comment type="cofactor">
    <cofactor evidence="1">
        <name>Fe(2+)</name>
        <dbReference type="ChEBI" id="CHEBI:29033"/>
    </cofactor>
    <text evidence="1">Binds 1 Fe(2+) ion per subunit.</text>
</comment>
<comment type="subcellular location">
    <subcellularLocation>
        <location evidence="1">Cytoplasm</location>
    </subcellularLocation>
</comment>
<comment type="similarity">
    <text evidence="1">Belongs to the KAE1 / TsaD family.</text>
</comment>
<protein>
    <recommendedName>
        <fullName evidence="1">tRNA N6-adenosine threonylcarbamoyltransferase</fullName>
        <ecNumber evidence="1">2.3.1.234</ecNumber>
    </recommendedName>
    <alternativeName>
        <fullName evidence="1">N6-L-threonylcarbamoyladenine synthase</fullName>
        <shortName evidence="1">t(6)A synthase</shortName>
    </alternativeName>
    <alternativeName>
        <fullName evidence="1">t(6)A37 threonylcarbamoyladenosine biosynthesis protein TsaD</fullName>
    </alternativeName>
    <alternativeName>
        <fullName evidence="1">tRNA threonylcarbamoyladenosine biosynthesis protein TsaD</fullName>
    </alternativeName>
</protein>
<name>TSAD_MYCM1</name>
<feature type="chain" id="PRO_0000303443" description="tRNA N6-adenosine threonylcarbamoyltransferase">
    <location>
        <begin position="1"/>
        <end position="305"/>
    </location>
</feature>
<feature type="binding site" evidence="1">
    <location>
        <position position="108"/>
    </location>
    <ligand>
        <name>Fe cation</name>
        <dbReference type="ChEBI" id="CHEBI:24875"/>
    </ligand>
</feature>
<feature type="binding site" evidence="1">
    <location>
        <position position="112"/>
    </location>
    <ligand>
        <name>Fe cation</name>
        <dbReference type="ChEBI" id="CHEBI:24875"/>
    </ligand>
</feature>
<feature type="binding site" evidence="1">
    <location>
        <begin position="130"/>
        <end position="134"/>
    </location>
    <ligand>
        <name>substrate</name>
    </ligand>
</feature>
<feature type="binding site" evidence="1">
    <location>
        <position position="163"/>
    </location>
    <ligand>
        <name>substrate</name>
    </ligand>
</feature>
<feature type="binding site" evidence="1">
    <location>
        <position position="176"/>
    </location>
    <ligand>
        <name>substrate</name>
    </ligand>
</feature>
<feature type="binding site" evidence="1">
    <location>
        <position position="180"/>
    </location>
    <ligand>
        <name>substrate</name>
    </ligand>
</feature>
<feature type="binding site" evidence="1">
    <location>
        <position position="264"/>
    </location>
    <ligand>
        <name>substrate</name>
    </ligand>
</feature>
<feature type="binding site" evidence="1">
    <location>
        <position position="288"/>
    </location>
    <ligand>
        <name>Fe cation</name>
        <dbReference type="ChEBI" id="CHEBI:24875"/>
    </ligand>
</feature>
<evidence type="ECO:0000255" key="1">
    <source>
        <dbReference type="HAMAP-Rule" id="MF_01445"/>
    </source>
</evidence>
<sequence length="305" mass="33714">MIILGIESSHDDTSIAILENKKVLFQLSLSQVKTHEKFGGTIPEIASREHVKNINILLTMLIEKFDLSKLDYIAYTEKPGLIGALQIGFLFASALSISLNKKLIPINHLEAHFFSSEITNEILYPAVGLVVSGGHSLIYYVKNVNSLEIIGETLDDAIGEVFDKISRKLNLGFPGGPIIDRISSEIVGDIKFTIPKTERDLDFSFSGIKTQVINYINNSKNLDINNVASSFQKTTIDYIEEKLKLAIKKHHPQSLVVGGGVSANTELRKRLSTLHANVLFPKKEYTTDNGAMIAITAFLKLNKSS</sequence>
<keyword id="KW-0012">Acyltransferase</keyword>
<keyword id="KW-0963">Cytoplasm</keyword>
<keyword id="KW-0408">Iron</keyword>
<keyword id="KW-0479">Metal-binding</keyword>
<keyword id="KW-1185">Reference proteome</keyword>
<keyword id="KW-0808">Transferase</keyword>
<keyword id="KW-0819">tRNA processing</keyword>
<gene>
    <name evidence="1" type="primary">tsaD</name>
    <name type="synonym">gcp</name>
    <name type="ordered locus">MMOB1300</name>
</gene>
<accession>Q6KIG0</accession>